<protein>
    <recommendedName>
        <fullName>BTB/POZ domain-containing protein 6-B</fullName>
    </recommendedName>
</protein>
<dbReference type="EMBL" id="BX255905">
    <property type="protein sequence ID" value="CAH68989.1"/>
    <property type="molecule type" value="Genomic_DNA"/>
</dbReference>
<dbReference type="EMBL" id="BX321888">
    <property type="protein sequence ID" value="CAK11390.1"/>
    <property type="molecule type" value="Genomic_DNA"/>
</dbReference>
<dbReference type="EMBL" id="BC124114">
    <property type="protein sequence ID" value="AAI24115.1"/>
    <property type="molecule type" value="mRNA"/>
</dbReference>
<dbReference type="RefSeq" id="NP_001019986.1">
    <property type="nucleotide sequence ID" value="NM_001024815.2"/>
</dbReference>
<dbReference type="SMR" id="Q5TZE1"/>
<dbReference type="FunCoup" id="Q5TZE1">
    <property type="interactions" value="1122"/>
</dbReference>
<dbReference type="STRING" id="7955.ENSDARP00000039906"/>
<dbReference type="PaxDb" id="7955-ENSDARP00000039906"/>
<dbReference type="Ensembl" id="ENSDART00000039907">
    <property type="protein sequence ID" value="ENSDARP00000039906"/>
    <property type="gene ID" value="ENSDARG00000032369"/>
</dbReference>
<dbReference type="Ensembl" id="ENSDART00000192629">
    <property type="protein sequence ID" value="ENSDARP00000153969"/>
    <property type="gene ID" value="ENSDARG00000114044"/>
</dbReference>
<dbReference type="GeneID" id="553533"/>
<dbReference type="KEGG" id="dre:553533"/>
<dbReference type="AGR" id="ZFIN:ZDB-GENE-030829-65"/>
<dbReference type="CTD" id="553533"/>
<dbReference type="ZFIN" id="ZDB-GENE-030829-65">
    <property type="gene designation" value="btbd6b"/>
</dbReference>
<dbReference type="eggNOG" id="KOG2075">
    <property type="taxonomic scope" value="Eukaryota"/>
</dbReference>
<dbReference type="HOGENOM" id="CLU_015899_2_1_1"/>
<dbReference type="InParanoid" id="Q5TZE1"/>
<dbReference type="OMA" id="DTICINC"/>
<dbReference type="OrthoDB" id="636773at2759"/>
<dbReference type="PhylomeDB" id="Q5TZE1"/>
<dbReference type="TreeFam" id="TF106482"/>
<dbReference type="Reactome" id="R-DRE-8951664">
    <property type="pathway name" value="Neddylation"/>
</dbReference>
<dbReference type="Reactome" id="R-DRE-983168">
    <property type="pathway name" value="Antigen processing: Ubiquitination &amp; Proteasome degradation"/>
</dbReference>
<dbReference type="PRO" id="PR:Q5TZE1"/>
<dbReference type="Proteomes" id="UP000000437">
    <property type="component" value="Alternate scaffold 20"/>
</dbReference>
<dbReference type="Proteomes" id="UP000000437">
    <property type="component" value="Chromosome 20"/>
</dbReference>
<dbReference type="Bgee" id="ENSDARG00000032369">
    <property type="expression patterns" value="Expressed in brain and 29 other cell types or tissues"/>
</dbReference>
<dbReference type="ExpressionAtlas" id="Q5TZE1">
    <property type="expression patterns" value="baseline and differential"/>
</dbReference>
<dbReference type="GO" id="GO:0005829">
    <property type="term" value="C:cytosol"/>
    <property type="evidence" value="ECO:0000318"/>
    <property type="project" value="GO_Central"/>
</dbReference>
<dbReference type="GO" id="GO:0005634">
    <property type="term" value="C:nucleus"/>
    <property type="evidence" value="ECO:0007669"/>
    <property type="project" value="UniProtKB-SubCell"/>
</dbReference>
<dbReference type="GO" id="GO:0022008">
    <property type="term" value="P:neurogenesis"/>
    <property type="evidence" value="ECO:0000318"/>
    <property type="project" value="GO_Central"/>
</dbReference>
<dbReference type="CDD" id="cd18349">
    <property type="entry name" value="BTB_POZ_BTBD6"/>
    <property type="match status" value="1"/>
</dbReference>
<dbReference type="FunFam" id="1.25.40.420:FF:000003">
    <property type="entry name" value="BTB/POZ domain-containing protein 3"/>
    <property type="match status" value="1"/>
</dbReference>
<dbReference type="FunFam" id="2.60.120.820:FF:000001">
    <property type="entry name" value="BTB/POZ domain-containing protein 3"/>
    <property type="match status" value="1"/>
</dbReference>
<dbReference type="FunFam" id="3.30.710.10:FF:000015">
    <property type="entry name" value="BTB/POZ domain-containing protein 3"/>
    <property type="match status" value="1"/>
</dbReference>
<dbReference type="Gene3D" id="1.25.40.420">
    <property type="match status" value="1"/>
</dbReference>
<dbReference type="Gene3D" id="2.60.120.820">
    <property type="entry name" value="PHR domain"/>
    <property type="match status" value="1"/>
</dbReference>
<dbReference type="Gene3D" id="3.30.710.10">
    <property type="entry name" value="Potassium Channel Kv1.1, Chain A"/>
    <property type="match status" value="1"/>
</dbReference>
<dbReference type="InterPro" id="IPR011705">
    <property type="entry name" value="BACK"/>
</dbReference>
<dbReference type="InterPro" id="IPR000210">
    <property type="entry name" value="BTB/POZ_dom"/>
</dbReference>
<dbReference type="InterPro" id="IPR049738">
    <property type="entry name" value="BTB_POZ_BTBD6"/>
</dbReference>
<dbReference type="InterPro" id="IPR012983">
    <property type="entry name" value="PHR"/>
</dbReference>
<dbReference type="InterPro" id="IPR038648">
    <property type="entry name" value="PHR_sf"/>
</dbReference>
<dbReference type="InterPro" id="IPR011333">
    <property type="entry name" value="SKP1/BTB/POZ_sf"/>
</dbReference>
<dbReference type="PANTHER" id="PTHR45774">
    <property type="entry name" value="BTB/POZ DOMAIN-CONTAINING"/>
    <property type="match status" value="1"/>
</dbReference>
<dbReference type="PANTHER" id="PTHR45774:SF5">
    <property type="entry name" value="BTB_POZ DOMAIN-CONTAINING PROTEIN 6"/>
    <property type="match status" value="1"/>
</dbReference>
<dbReference type="Pfam" id="PF07707">
    <property type="entry name" value="BACK"/>
    <property type="match status" value="1"/>
</dbReference>
<dbReference type="Pfam" id="PF00651">
    <property type="entry name" value="BTB"/>
    <property type="match status" value="1"/>
</dbReference>
<dbReference type="Pfam" id="PF08005">
    <property type="entry name" value="PHR"/>
    <property type="match status" value="1"/>
</dbReference>
<dbReference type="SMART" id="SM00875">
    <property type="entry name" value="BACK"/>
    <property type="match status" value="1"/>
</dbReference>
<dbReference type="SMART" id="SM00225">
    <property type="entry name" value="BTB"/>
    <property type="match status" value="1"/>
</dbReference>
<dbReference type="SUPFAM" id="SSF54695">
    <property type="entry name" value="POZ domain"/>
    <property type="match status" value="1"/>
</dbReference>
<dbReference type="PROSITE" id="PS50097">
    <property type="entry name" value="BTB"/>
    <property type="match status" value="1"/>
</dbReference>
<name>BTB6B_DANRE</name>
<feature type="chain" id="PRO_0000380248" description="BTB/POZ domain-containing protein 6-B">
    <location>
        <begin position="1"/>
        <end position="482"/>
    </location>
</feature>
<feature type="domain" description="BTB" evidence="2">
    <location>
        <begin position="80"/>
        <end position="150"/>
    </location>
</feature>
<accession>Q5TZE1</accession>
<proteinExistence type="evidence at transcript level"/>
<evidence type="ECO:0000250" key="1">
    <source>
        <dbReference type="UniProtKB" id="A9JRD8"/>
    </source>
</evidence>
<evidence type="ECO:0000255" key="2">
    <source>
        <dbReference type="PROSITE-ProRule" id="PRU00037"/>
    </source>
</evidence>
<evidence type="ECO:0000269" key="3">
    <source>
    </source>
</evidence>
<sequence>MAAELYPASINTNLPNSNSTAVTAASKKTIVQVTQTVTTPTTTATQQNINNNNVETASWQSTHPTLRERNALMFNNELMADVHFVVGPPGASQKVPAHKYVLAVGSSVFGAMFYGDLAEGESEIHIPDVEPAAFLILLKYMYSDEIELEADTVLATLYAAKKYIVPALAKACVTFLETSLEAKNACVLLSQSRLFEEPELTLRCWEVIDAQAELALHSEGFCEIDLQTLEIILKRETLNTREAVVFQAALDWAVAECKRQGLGPTARNKRAVLGKALYLVRIPTMTLEEFANGAAQSDVLTLEETHDVFLWYTAANKPKLEFPLQKRKGLTPQRCHRFQSSAYRSNQWRYRGRCDSIQFAVDKRIFIAGLGLYGSSGGKAEYSVKIELKRQGVTLAQNLTKFISDGSSNTFSVWFEHPVQVEQDTFYTVSAVLDGNELSYFGQEGMTEVQCGKVTFQFQCSSDSTNGTGVQGGQIPELVFYA</sequence>
<organism>
    <name type="scientific">Danio rerio</name>
    <name type="common">Zebrafish</name>
    <name type="synonym">Brachydanio rerio</name>
    <dbReference type="NCBI Taxonomy" id="7955"/>
    <lineage>
        <taxon>Eukaryota</taxon>
        <taxon>Metazoa</taxon>
        <taxon>Chordata</taxon>
        <taxon>Craniata</taxon>
        <taxon>Vertebrata</taxon>
        <taxon>Euteleostomi</taxon>
        <taxon>Actinopterygii</taxon>
        <taxon>Neopterygii</taxon>
        <taxon>Teleostei</taxon>
        <taxon>Ostariophysi</taxon>
        <taxon>Cypriniformes</taxon>
        <taxon>Danionidae</taxon>
        <taxon>Danioninae</taxon>
        <taxon>Danio</taxon>
    </lineage>
</organism>
<keyword id="KW-0963">Cytoplasm</keyword>
<keyword id="KW-0217">Developmental protein</keyword>
<keyword id="KW-0221">Differentiation</keyword>
<keyword id="KW-0524">Neurogenesis</keyword>
<keyword id="KW-0539">Nucleus</keyword>
<keyword id="KW-1185">Reference proteome</keyword>
<keyword id="KW-0833">Ubl conjugation pathway</keyword>
<comment type="function">
    <text evidence="1">Adapter protein for the cul3 E3 ubiquitin-protein ligase complex. Promotes the export of zbtb16/plzf from the nucleus to the cytoplasm and targets zbtb16/plzf for ubiquitination and degradation. Up-regulates neurog1 expression and antagonizes zbtb16/plzf, to promote neurogenesis (By similarity).</text>
</comment>
<comment type="subunit">
    <text evidence="1">Interacts with cul3. Interacts (via BTB domain) with zbtb16/plzf (By similarity).</text>
</comment>
<comment type="subcellular location">
    <subcellularLocation>
        <location evidence="1">Cytoplasm</location>
    </subcellularLocation>
    <subcellularLocation>
        <location evidence="1">Nucleus</location>
    </subcellularLocation>
    <text evidence="1">Present mainly, but not excusively in the cytoplasm.</text>
</comment>
<comment type="tissue specificity">
    <text evidence="3">In embryos, expressed in the cranial ganglia.</text>
</comment>
<reference key="1">
    <citation type="journal article" date="2013" name="Nature">
        <title>The zebrafish reference genome sequence and its relationship to the human genome.</title>
        <authorList>
            <person name="Howe K."/>
            <person name="Clark M.D."/>
            <person name="Torroja C.F."/>
            <person name="Torrance J."/>
            <person name="Berthelot C."/>
            <person name="Muffato M."/>
            <person name="Collins J.E."/>
            <person name="Humphray S."/>
            <person name="McLaren K."/>
            <person name="Matthews L."/>
            <person name="McLaren S."/>
            <person name="Sealy I."/>
            <person name="Caccamo M."/>
            <person name="Churcher C."/>
            <person name="Scott C."/>
            <person name="Barrett J.C."/>
            <person name="Koch R."/>
            <person name="Rauch G.J."/>
            <person name="White S."/>
            <person name="Chow W."/>
            <person name="Kilian B."/>
            <person name="Quintais L.T."/>
            <person name="Guerra-Assuncao J.A."/>
            <person name="Zhou Y."/>
            <person name="Gu Y."/>
            <person name="Yen J."/>
            <person name="Vogel J.H."/>
            <person name="Eyre T."/>
            <person name="Redmond S."/>
            <person name="Banerjee R."/>
            <person name="Chi J."/>
            <person name="Fu B."/>
            <person name="Langley E."/>
            <person name="Maguire S.F."/>
            <person name="Laird G.K."/>
            <person name="Lloyd D."/>
            <person name="Kenyon E."/>
            <person name="Donaldson S."/>
            <person name="Sehra H."/>
            <person name="Almeida-King J."/>
            <person name="Loveland J."/>
            <person name="Trevanion S."/>
            <person name="Jones M."/>
            <person name="Quail M."/>
            <person name="Willey D."/>
            <person name="Hunt A."/>
            <person name="Burton J."/>
            <person name="Sims S."/>
            <person name="McLay K."/>
            <person name="Plumb B."/>
            <person name="Davis J."/>
            <person name="Clee C."/>
            <person name="Oliver K."/>
            <person name="Clark R."/>
            <person name="Riddle C."/>
            <person name="Elliot D."/>
            <person name="Threadgold G."/>
            <person name="Harden G."/>
            <person name="Ware D."/>
            <person name="Begum S."/>
            <person name="Mortimore B."/>
            <person name="Kerry G."/>
            <person name="Heath P."/>
            <person name="Phillimore B."/>
            <person name="Tracey A."/>
            <person name="Corby N."/>
            <person name="Dunn M."/>
            <person name="Johnson C."/>
            <person name="Wood J."/>
            <person name="Clark S."/>
            <person name="Pelan S."/>
            <person name="Griffiths G."/>
            <person name="Smith M."/>
            <person name="Glithero R."/>
            <person name="Howden P."/>
            <person name="Barker N."/>
            <person name="Lloyd C."/>
            <person name="Stevens C."/>
            <person name="Harley J."/>
            <person name="Holt K."/>
            <person name="Panagiotidis G."/>
            <person name="Lovell J."/>
            <person name="Beasley H."/>
            <person name="Henderson C."/>
            <person name="Gordon D."/>
            <person name="Auger K."/>
            <person name="Wright D."/>
            <person name="Collins J."/>
            <person name="Raisen C."/>
            <person name="Dyer L."/>
            <person name="Leung K."/>
            <person name="Robertson L."/>
            <person name="Ambridge K."/>
            <person name="Leongamornlert D."/>
            <person name="McGuire S."/>
            <person name="Gilderthorp R."/>
            <person name="Griffiths C."/>
            <person name="Manthravadi D."/>
            <person name="Nichol S."/>
            <person name="Barker G."/>
            <person name="Whitehead S."/>
            <person name="Kay M."/>
            <person name="Brown J."/>
            <person name="Murnane C."/>
            <person name="Gray E."/>
            <person name="Humphries M."/>
            <person name="Sycamore N."/>
            <person name="Barker D."/>
            <person name="Saunders D."/>
            <person name="Wallis J."/>
            <person name="Babbage A."/>
            <person name="Hammond S."/>
            <person name="Mashreghi-Mohammadi M."/>
            <person name="Barr L."/>
            <person name="Martin S."/>
            <person name="Wray P."/>
            <person name="Ellington A."/>
            <person name="Matthews N."/>
            <person name="Ellwood M."/>
            <person name="Woodmansey R."/>
            <person name="Clark G."/>
            <person name="Cooper J."/>
            <person name="Tromans A."/>
            <person name="Grafham D."/>
            <person name="Skuce C."/>
            <person name="Pandian R."/>
            <person name="Andrews R."/>
            <person name="Harrison E."/>
            <person name="Kimberley A."/>
            <person name="Garnett J."/>
            <person name="Fosker N."/>
            <person name="Hall R."/>
            <person name="Garner P."/>
            <person name="Kelly D."/>
            <person name="Bird C."/>
            <person name="Palmer S."/>
            <person name="Gehring I."/>
            <person name="Berger A."/>
            <person name="Dooley C.M."/>
            <person name="Ersan-Urun Z."/>
            <person name="Eser C."/>
            <person name="Geiger H."/>
            <person name="Geisler M."/>
            <person name="Karotki L."/>
            <person name="Kirn A."/>
            <person name="Konantz J."/>
            <person name="Konantz M."/>
            <person name="Oberlander M."/>
            <person name="Rudolph-Geiger S."/>
            <person name="Teucke M."/>
            <person name="Lanz C."/>
            <person name="Raddatz G."/>
            <person name="Osoegawa K."/>
            <person name="Zhu B."/>
            <person name="Rapp A."/>
            <person name="Widaa S."/>
            <person name="Langford C."/>
            <person name="Yang F."/>
            <person name="Schuster S.C."/>
            <person name="Carter N.P."/>
            <person name="Harrow J."/>
            <person name="Ning Z."/>
            <person name="Herrero J."/>
            <person name="Searle S.M."/>
            <person name="Enright A."/>
            <person name="Geisler R."/>
            <person name="Plasterk R.H."/>
            <person name="Lee C."/>
            <person name="Westerfield M."/>
            <person name="de Jong P.J."/>
            <person name="Zon L.I."/>
            <person name="Postlethwait J.H."/>
            <person name="Nusslein-Volhard C."/>
            <person name="Hubbard T.J."/>
            <person name="Roest Crollius H."/>
            <person name="Rogers J."/>
            <person name="Stemple D.L."/>
        </authorList>
    </citation>
    <scope>NUCLEOTIDE SEQUENCE [LARGE SCALE GENOMIC DNA]</scope>
    <source>
        <strain>Tuebingen</strain>
    </source>
</reference>
<reference key="2">
    <citation type="submission" date="2006-09" db="EMBL/GenBank/DDBJ databases">
        <authorList>
            <consortium name="NIH - Zebrafish Gene Collection (ZGC) project"/>
        </authorList>
    </citation>
    <scope>NUCLEOTIDE SEQUENCE [LARGE SCALE MRNA]</scope>
    <source>
        <tissue>Ovary</tissue>
    </source>
</reference>
<reference key="3">
    <citation type="journal article" date="2010" name="Genes Dev.">
        <title>A feedback loop mediated by degradation of an inhibitor is required to initiate neuronal differentiation.</title>
        <authorList>
            <person name="Sobieszczuk D.F."/>
            <person name="Poliakov A."/>
            <person name="Xu Q."/>
            <person name="Wilkinson D.G."/>
        </authorList>
    </citation>
    <scope>TISSUE SPECIFICITY</scope>
</reference>
<gene>
    <name type="primary">btbd6b</name>
    <name type="synonym">btbd6</name>
    <name type="ORF">si:dkey-11b8.2</name>
</gene>